<proteinExistence type="evidence at protein level"/>
<dbReference type="EC" id="1.21.99.5" evidence="4 5 6"/>
<dbReference type="EMBL" id="AJ439607">
    <property type="protein sequence ID" value="CAD28790.2"/>
    <property type="molecule type" value="Genomic_DNA"/>
</dbReference>
<dbReference type="SMR" id="Q8GJ27"/>
<dbReference type="BRENDA" id="1.21.99.5">
    <property type="organism ID" value="1852"/>
</dbReference>
<dbReference type="GO" id="GO:0005886">
    <property type="term" value="C:plasma membrane"/>
    <property type="evidence" value="ECO:0007669"/>
    <property type="project" value="UniProtKB-SubCell"/>
</dbReference>
<dbReference type="GO" id="GO:0051539">
    <property type="term" value="F:4 iron, 4 sulfur cluster binding"/>
    <property type="evidence" value="ECO:0007669"/>
    <property type="project" value="UniProtKB-KW"/>
</dbReference>
<dbReference type="GO" id="GO:0046872">
    <property type="term" value="F:metal ion binding"/>
    <property type="evidence" value="ECO:0007669"/>
    <property type="project" value="UniProtKB-KW"/>
</dbReference>
<dbReference type="GO" id="GO:0016491">
    <property type="term" value="F:oxidoreductase activity"/>
    <property type="evidence" value="ECO:0007669"/>
    <property type="project" value="UniProtKB-KW"/>
</dbReference>
<dbReference type="Gene3D" id="3.30.70.20">
    <property type="match status" value="1"/>
</dbReference>
<dbReference type="InterPro" id="IPR017896">
    <property type="entry name" value="4Fe4S_Fe-S-bd"/>
</dbReference>
<dbReference type="InterPro" id="IPR017900">
    <property type="entry name" value="4Fe4S_Fe_S_CS"/>
</dbReference>
<dbReference type="InterPro" id="IPR012832">
    <property type="entry name" value="RDH"/>
</dbReference>
<dbReference type="InterPro" id="IPR006311">
    <property type="entry name" value="TAT_signal"/>
</dbReference>
<dbReference type="InterPro" id="IPR019546">
    <property type="entry name" value="TAT_signal_bac_arc"/>
</dbReference>
<dbReference type="NCBIfam" id="TIGR02486">
    <property type="entry name" value="RDH"/>
    <property type="match status" value="1"/>
</dbReference>
<dbReference type="NCBIfam" id="TIGR01409">
    <property type="entry name" value="TAT_signal_seq"/>
    <property type="match status" value="1"/>
</dbReference>
<dbReference type="PANTHER" id="PTHR42827:SF1">
    <property type="entry name" value="IRON-SULFUR CLUSTER-BINDING PROTEIN"/>
    <property type="match status" value="1"/>
</dbReference>
<dbReference type="PANTHER" id="PTHR42827">
    <property type="entry name" value="IRON-SULFUR CLUSTER-BINDING PROTEIN-RELATED"/>
    <property type="match status" value="1"/>
</dbReference>
<dbReference type="Pfam" id="PF13484">
    <property type="entry name" value="Fer4_16"/>
    <property type="match status" value="1"/>
</dbReference>
<dbReference type="Pfam" id="PF10518">
    <property type="entry name" value="TAT_signal"/>
    <property type="match status" value="1"/>
</dbReference>
<dbReference type="SUPFAM" id="SSF54862">
    <property type="entry name" value="4Fe-4S ferredoxins"/>
    <property type="match status" value="1"/>
</dbReference>
<dbReference type="PROSITE" id="PS00198">
    <property type="entry name" value="4FE4S_FER_1"/>
    <property type="match status" value="1"/>
</dbReference>
<dbReference type="PROSITE" id="PS51379">
    <property type="entry name" value="4FE4S_FER_2"/>
    <property type="match status" value="1"/>
</dbReference>
<dbReference type="PROSITE" id="PS51318">
    <property type="entry name" value="TAT"/>
    <property type="match status" value="1"/>
</dbReference>
<evidence type="ECO:0000250" key="1">
    <source>
        <dbReference type="UniProtKB" id="O68252"/>
    </source>
</evidence>
<evidence type="ECO:0000255" key="2">
    <source>
        <dbReference type="PROSITE-ProRule" id="PRU00648"/>
    </source>
</evidence>
<evidence type="ECO:0000255" key="3">
    <source>
        <dbReference type="PROSITE-ProRule" id="PRU00711"/>
    </source>
</evidence>
<evidence type="ECO:0000269" key="4">
    <source>
    </source>
</evidence>
<evidence type="ECO:0000269" key="5">
    <source>
    </source>
</evidence>
<evidence type="ECO:0000269" key="6">
    <source>
    </source>
</evidence>
<evidence type="ECO:0000303" key="7">
    <source>
    </source>
</evidence>
<evidence type="ECO:0000303" key="8">
    <source>
    </source>
</evidence>
<evidence type="ECO:0000303" key="9">
    <source>
    </source>
</evidence>
<evidence type="ECO:0000305" key="10"/>
<evidence type="ECO:0000305" key="11">
    <source>
    </source>
</evidence>
<feature type="signal peptide" description="Tat-type signal" evidence="2 4">
    <location>
        <begin position="1"/>
        <end position="39"/>
    </location>
</feature>
<feature type="chain" id="PRO_5004306095" description="Tetrachloroethene reductive dehalogenase" evidence="4">
    <location>
        <begin position="40"/>
        <end position="551"/>
    </location>
</feature>
<feature type="domain" description="4Fe-4S ferredoxin-type 1" evidence="3">
    <location>
        <begin position="411"/>
        <end position="440"/>
    </location>
</feature>
<feature type="domain" description="4Fe-4S ferredoxin-type 2" evidence="10">
    <location>
        <begin position="478"/>
        <end position="496"/>
    </location>
</feature>
<feature type="binding site" evidence="1">
    <location>
        <position position="420"/>
    </location>
    <ligand>
        <name>[4Fe-4S] cluster</name>
        <dbReference type="ChEBI" id="CHEBI:49883"/>
        <label>1</label>
    </ligand>
</feature>
<feature type="binding site" evidence="1">
    <location>
        <position position="423"/>
    </location>
    <ligand>
        <name>[4Fe-4S] cluster</name>
        <dbReference type="ChEBI" id="CHEBI:49883"/>
        <label>1</label>
    </ligand>
</feature>
<feature type="binding site" evidence="1">
    <location>
        <position position="426"/>
    </location>
    <ligand>
        <name>[4Fe-4S] cluster</name>
        <dbReference type="ChEBI" id="CHEBI:49883"/>
        <label>1</label>
    </ligand>
</feature>
<feature type="binding site" evidence="1">
    <location>
        <position position="430"/>
    </location>
    <ligand>
        <name>[4Fe-4S] cluster</name>
        <dbReference type="ChEBI" id="CHEBI:49883"/>
        <label>2</label>
    </ligand>
</feature>
<feature type="binding site" evidence="1">
    <location>
        <position position="467"/>
    </location>
    <ligand>
        <name>[4Fe-4S] cluster</name>
        <dbReference type="ChEBI" id="CHEBI:49883"/>
        <label>2</label>
    </ligand>
</feature>
<feature type="binding site" evidence="1">
    <location>
        <position position="478"/>
    </location>
    <ligand>
        <name>[4Fe-4S] cluster</name>
        <dbReference type="ChEBI" id="CHEBI:49883"/>
        <label>2</label>
    </ligand>
</feature>
<feature type="binding site" evidence="1">
    <location>
        <position position="481"/>
    </location>
    <ligand>
        <name>[4Fe-4S] cluster</name>
        <dbReference type="ChEBI" id="CHEBI:49883"/>
        <label>2</label>
    </ligand>
</feature>
<feature type="binding site" evidence="1">
    <location>
        <position position="485"/>
    </location>
    <ligand>
        <name>[4Fe-4S] cluster</name>
        <dbReference type="ChEBI" id="CHEBI:49883"/>
        <label>1</label>
    </ligand>
</feature>
<reference key="1">
    <citation type="journal article" date="2003" name="Appl. Environ. Microbiol.">
        <title>Characterization of the corrinoid iron-sulfur protein tetrachloroethene reductive dehalogenase of Dehalobacter restrictus.</title>
        <authorList>
            <person name="Maillard J."/>
            <person name="Schumacher W."/>
            <person name="Vazquez F."/>
            <person name="Regeard C."/>
            <person name="Hagen W.R."/>
            <person name="Holliger C."/>
        </authorList>
    </citation>
    <scope>NUCLEOTIDE SEQUENCE [GENOMIC DNA]</scope>
    <scope>PROTEIN SEQUENCE OF 40-59</scope>
    <scope>FUNCTION</scope>
    <scope>CATALYTIC ACTIVITY</scope>
    <scope>COFACTOR</scope>
    <scope>ACTIVITY REGULATION</scope>
    <scope>BIOPHYSICOCHEMICAL PROPERTIES</scope>
    <scope>SUBUNIT</scope>
    <scope>SUBCELLULAR LOCATION</scope>
    <source>
        <strain>DSM 9455 / PER-K23</strain>
    </source>
</reference>
<reference key="2">
    <citation type="journal article" date="1996" name="J. Bacteriol.">
        <title>The proton/electron ration of the menaquinone-dependent electron transport from dihydrogen to tetrachloroethene in 'Dehalobacter restrictus'.</title>
        <authorList>
            <person name="Schumacher W."/>
            <person name="Holliger C."/>
        </authorList>
    </citation>
    <scope>FUNCTION</scope>
    <scope>CATALYTIC ACTIVITY</scope>
    <scope>COFACTOR</scope>
    <scope>ACTIVITY REGULATION</scope>
    <scope>SUBCELLULAR LOCATION</scope>
</reference>
<reference key="3">
    <citation type="journal article" date="1997" name="FEBS Lett.">
        <title>Redox chemistry of cobalamin and iron-sulfur cofactors in the tetrachloroethene reductase of Dehalobacter restrictus.</title>
        <authorList>
            <person name="Schumacher W."/>
            <person name="Holliger C."/>
            <person name="Zehnder A.J."/>
            <person name="Hagen W.R."/>
        </authorList>
    </citation>
    <scope>FUNCTION</scope>
    <scope>CATALYTIC ACTIVITY</scope>
    <scope>COFACTOR</scope>
    <scope>SUBCELLULAR LOCATION</scope>
    <source>
        <strain>DSM 9455 / PER-K23</strain>
    </source>
</reference>
<sequence length="551" mass="61202">MGEINRRNFLKASMLGAAAAAVASASAVKGMVSPLVADAADIVAPITETSEFPYKVDAKYQRYNSLKNFFEKTFDPEANKTPIKFHYDDVSKITGKKDTGKDLPTLNAERLGIKGRPATHTETSILFQTQHLGAMLTQRHNETGWTGLDEALNAGAWAVEFDYSGFNAAGGGPGSVIPLYPINPMTNEIANEPVMVPGLYNWDNIDVESVRQQGQQWKFESKEEASKMVKKATRLLGADLVGIAPYDERWTYSTWGRKILKPCKMPNGRTKYLPWDLPKMLSGGGVEVFGHAKFEPDWEKYAGFKPKSVIVFVLEEDYEAIRTSPSVISSATVGKSYSNMAEVAYKIAVFLRKLGYYAAPCGNDTGLSVPMAVQAGLGEAGRNGLLITQKFGPRHRIAKVYTDLELAPDKPRKFGVREFCRLCKKCADACPAQAISHEKDPKVLQPEDCEVAENPYTEKWHLDSNRCGSFWAYNGSPCANCVAVCSWNKVETWNHDVARIATQIPLLQDAARKFDEWFGYNGPVNPDERLESGYVQNMVKDFWNNPESIKQ</sequence>
<comment type="function">
    <text evidence="4 5 6">Catalyzes the reductive dechlorination of tetrachloroethene (PCE) to trichloroethene (TCE) and of trichloroethene to cis-1,2-dichloroethene (DCE) (PubMed:12902251, PubMed:8636034). Can also use trichlorofluoroethene, tetrachloromethane, hexachloroethane, tetrachloroethane, trichloroethane and 1,1,1-trichloro-2,2,2-trifluoroethane (PubMed:12902251). Menaquinone can act as the electron donor (PubMed:8636034). Reduced methyl viologen can act as the artificial electron donor (PubMed:12902251, PubMed:9224702).</text>
</comment>
<comment type="catalytic activity">
    <reaction evidence="4 5 6">
        <text>trichloroethene + chloride + A + H(+) = tetrachloroethene + AH2</text>
        <dbReference type="Rhea" id="RHEA:20353"/>
        <dbReference type="ChEBI" id="CHEBI:13193"/>
        <dbReference type="ChEBI" id="CHEBI:15378"/>
        <dbReference type="ChEBI" id="CHEBI:16602"/>
        <dbReference type="ChEBI" id="CHEBI:17300"/>
        <dbReference type="ChEBI" id="CHEBI:17499"/>
        <dbReference type="ChEBI" id="CHEBI:17996"/>
        <dbReference type="EC" id="1.21.99.5"/>
    </reaction>
    <physiologicalReaction direction="right-to-left" evidence="4 5 6">
        <dbReference type="Rhea" id="RHEA:20355"/>
    </physiologicalReaction>
</comment>
<comment type="catalytic activity">
    <reaction evidence="4 5">
        <text>trichloroethene + AH2 = (Z)-1,2-dichloroethene + chloride + A + H(+)</text>
        <dbReference type="Rhea" id="RHEA:67992"/>
        <dbReference type="ChEBI" id="CHEBI:13193"/>
        <dbReference type="ChEBI" id="CHEBI:15378"/>
        <dbReference type="ChEBI" id="CHEBI:16602"/>
        <dbReference type="ChEBI" id="CHEBI:17499"/>
        <dbReference type="ChEBI" id="CHEBI:17996"/>
        <dbReference type="ChEBI" id="CHEBI:28805"/>
    </reaction>
    <physiologicalReaction direction="left-to-right" evidence="4 5">
        <dbReference type="Rhea" id="RHEA:67993"/>
    </physiologicalReaction>
</comment>
<comment type="cofactor">
    <cofactor evidence="4 6">
        <name>[4Fe-4S] cluster</name>
        <dbReference type="ChEBI" id="CHEBI:49883"/>
    </cofactor>
    <text evidence="4 6">Binds 2 [4Fe-4S] clusters.</text>
</comment>
<comment type="cofactor">
    <cofactor evidence="4 6 11">
        <name>corrinoid</name>
        <dbReference type="ChEBI" id="CHEBI:33913"/>
    </cofactor>
    <text evidence="4 6">The corrinoid is probably a cobalamin.</text>
</comment>
<comment type="activity regulation">
    <text evidence="4 5">Activity is inhibited by ammonium ions (PubMed:12902251). Photoreversibly inactivated by 1-iodopropane (PubMed:12902251, PubMed:8636034).</text>
</comment>
<comment type="biophysicochemical properties">
    <kinetics>
        <KM evidence="4">20.4 uM for tetrachloroethene</KM>
        <KM evidence="4">23.7 uM for trichloroethene</KM>
        <KM evidence="4">47 uM for reduced methyl viologen</KM>
    </kinetics>
    <phDependence>
        <text evidence="4">Optimum pH is 8.1.</text>
    </phDependence>
</comment>
<comment type="subunit">
    <text evidence="4">Monomer.</text>
</comment>
<comment type="subcellular location">
    <subcellularLocation>
        <location evidence="4 5 6">Cell membrane</location>
        <topology evidence="5">Peripheral membrane protein</topology>
        <orientation evidence="5">Cytoplasmic side</orientation>
    </subcellularLocation>
</comment>
<comment type="PTM">
    <text evidence="2 4">Predicted to be exported by the Tat system. The position of the signal peptide cleavage has been experimentally proven.</text>
</comment>
<comment type="similarity">
    <text evidence="10">Belongs to the PceA family.</text>
</comment>
<gene>
    <name evidence="7" type="primary">pceA</name>
</gene>
<name>PCEA_DEHRP</name>
<accession>Q8GJ27</accession>
<keyword id="KW-0004">4Fe-4S</keyword>
<keyword id="KW-1003">Cell membrane</keyword>
<keyword id="KW-0903">Direct protein sequencing</keyword>
<keyword id="KW-0408">Iron</keyword>
<keyword id="KW-0411">Iron-sulfur</keyword>
<keyword id="KW-0472">Membrane</keyword>
<keyword id="KW-0479">Metal-binding</keyword>
<keyword id="KW-0560">Oxidoreductase</keyword>
<keyword id="KW-0677">Repeat</keyword>
<keyword id="KW-0732">Signal</keyword>
<protein>
    <recommendedName>
        <fullName evidence="7">Tetrachloroethene reductive dehalogenase</fullName>
        <ecNumber evidence="4 5 6">1.21.99.5</ecNumber>
    </recommendedName>
    <alternativeName>
        <fullName evidence="8">TCE reductase</fullName>
    </alternativeName>
    <alternativeName>
        <fullName evidence="9">Tetrachloroethene reductase</fullName>
        <shortName evidence="8">PCE reductase</shortName>
    </alternativeName>
</protein>
<organism>
    <name type="scientific">Dehalobacter restrictus (strain DSM 9455 / PER-K23)</name>
    <dbReference type="NCBI Taxonomy" id="871738"/>
    <lineage>
        <taxon>Bacteria</taxon>
        <taxon>Bacillati</taxon>
        <taxon>Bacillota</taxon>
        <taxon>Clostridia</taxon>
        <taxon>Eubacteriales</taxon>
        <taxon>Desulfitobacteriaceae</taxon>
        <taxon>Dehalobacter</taxon>
    </lineage>
</organism>